<proteinExistence type="inferred from homology"/>
<protein>
    <recommendedName>
        <fullName evidence="1">Small ribosomal subunit protein bS18c</fullName>
    </recommendedName>
    <alternativeName>
        <fullName evidence="2">30S ribosomal protein S18, chloroplastic</fullName>
    </alternativeName>
</protein>
<gene>
    <name evidence="1" type="primary">rps18</name>
</gene>
<sequence>MEKSKRLFIKSKRSFRRRLPPIQSGDRIDYKNMGLICRFISEQGKILSRRVNRLTLKQQRLITIAIKQARILSSLPFLNNEKQFEKSESTEKITTLRKKNRN</sequence>
<comment type="subunit">
    <text evidence="1">Part of the 30S ribosomal subunit.</text>
</comment>
<comment type="subcellular location">
    <subcellularLocation>
        <location>Plastid</location>
        <location>Chloroplast</location>
    </subcellularLocation>
</comment>
<comment type="similarity">
    <text evidence="1">Belongs to the bacterial ribosomal protein bS18 family.</text>
</comment>
<organism>
    <name type="scientific">Phaseolus vulgaris</name>
    <name type="common">Kidney bean</name>
    <name type="synonym">French bean</name>
    <dbReference type="NCBI Taxonomy" id="3885"/>
    <lineage>
        <taxon>Eukaryota</taxon>
        <taxon>Viridiplantae</taxon>
        <taxon>Streptophyta</taxon>
        <taxon>Embryophyta</taxon>
        <taxon>Tracheophyta</taxon>
        <taxon>Spermatophyta</taxon>
        <taxon>Magnoliopsida</taxon>
        <taxon>eudicotyledons</taxon>
        <taxon>Gunneridae</taxon>
        <taxon>Pentapetalae</taxon>
        <taxon>rosids</taxon>
        <taxon>fabids</taxon>
        <taxon>Fabales</taxon>
        <taxon>Fabaceae</taxon>
        <taxon>Papilionoideae</taxon>
        <taxon>50 kb inversion clade</taxon>
        <taxon>NPAAA clade</taxon>
        <taxon>indigoferoid/millettioid clade</taxon>
        <taxon>Phaseoleae</taxon>
        <taxon>Phaseolus</taxon>
    </lineage>
</organism>
<keyword id="KW-0150">Chloroplast</keyword>
<keyword id="KW-0934">Plastid</keyword>
<keyword id="KW-0687">Ribonucleoprotein</keyword>
<keyword id="KW-0689">Ribosomal protein</keyword>
<keyword id="KW-0694">RNA-binding</keyword>
<keyword id="KW-0699">rRNA-binding</keyword>
<name>RR18_PHAVU</name>
<reference key="1">
    <citation type="journal article" date="2007" name="BMC Genomics">
        <title>Rapid evolutionary change of common bean (Phaseolus vulgaris L) plastome, and the genomic diversification of legume chloroplasts.</title>
        <authorList>
            <person name="Guo X."/>
            <person name="Castillo-Ramirez S."/>
            <person name="Gonzalez V."/>
            <person name="Bustos P."/>
            <person name="Fernandez-Vazquez J.L."/>
            <person name="Santamaria R.I."/>
            <person name="Arellano J."/>
            <person name="Cevallos M.A."/>
            <person name="Davila G."/>
        </authorList>
    </citation>
    <scope>NUCLEOTIDE SEQUENCE [LARGE SCALE GENOMIC DNA]</scope>
    <source>
        <strain>cv. Negro Jamapa</strain>
    </source>
</reference>
<reference key="2">
    <citation type="submission" date="2007-10" db="EMBL/GenBank/DDBJ databases">
        <title>Complete nucleotide sequence of the plastid genome of the common bean, Phaseolus vulgaris.</title>
        <authorList>
            <person name="Moore M.J."/>
            <person name="Triplett E.W."/>
            <person name="Broughton W.J."/>
            <person name="Soltis P.S."/>
            <person name="Soltis D.E."/>
        </authorList>
    </citation>
    <scope>NUCLEOTIDE SEQUENCE [LARGE SCALE GENOMIC DNA]</scope>
</reference>
<geneLocation type="chloroplast"/>
<dbReference type="EMBL" id="DQ886273">
    <property type="protein sequence ID" value="ABH88108.1"/>
    <property type="molecule type" value="Genomic_DNA"/>
</dbReference>
<dbReference type="EMBL" id="EU196765">
    <property type="protein sequence ID" value="ABW22761.1"/>
    <property type="molecule type" value="Genomic_DNA"/>
</dbReference>
<dbReference type="RefSeq" id="YP_001122828.1">
    <property type="nucleotide sequence ID" value="NC_009259.1"/>
</dbReference>
<dbReference type="SMR" id="A4GGC7"/>
<dbReference type="GeneID" id="4961763"/>
<dbReference type="KEGG" id="pvu:4961763"/>
<dbReference type="GO" id="GO:0009507">
    <property type="term" value="C:chloroplast"/>
    <property type="evidence" value="ECO:0007669"/>
    <property type="project" value="UniProtKB-SubCell"/>
</dbReference>
<dbReference type="GO" id="GO:0005763">
    <property type="term" value="C:mitochondrial small ribosomal subunit"/>
    <property type="evidence" value="ECO:0007669"/>
    <property type="project" value="TreeGrafter"/>
</dbReference>
<dbReference type="GO" id="GO:0070181">
    <property type="term" value="F:small ribosomal subunit rRNA binding"/>
    <property type="evidence" value="ECO:0007669"/>
    <property type="project" value="TreeGrafter"/>
</dbReference>
<dbReference type="GO" id="GO:0003735">
    <property type="term" value="F:structural constituent of ribosome"/>
    <property type="evidence" value="ECO:0007669"/>
    <property type="project" value="InterPro"/>
</dbReference>
<dbReference type="GO" id="GO:0006412">
    <property type="term" value="P:translation"/>
    <property type="evidence" value="ECO:0007669"/>
    <property type="project" value="UniProtKB-UniRule"/>
</dbReference>
<dbReference type="FunFam" id="4.10.640.10:FF:000002">
    <property type="entry name" value="30S ribosomal protein S18, chloroplastic"/>
    <property type="match status" value="1"/>
</dbReference>
<dbReference type="Gene3D" id="4.10.640.10">
    <property type="entry name" value="Ribosomal protein S18"/>
    <property type="match status" value="1"/>
</dbReference>
<dbReference type="HAMAP" id="MF_00270">
    <property type="entry name" value="Ribosomal_bS18"/>
    <property type="match status" value="1"/>
</dbReference>
<dbReference type="InterPro" id="IPR001648">
    <property type="entry name" value="Ribosomal_bS18"/>
</dbReference>
<dbReference type="InterPro" id="IPR018275">
    <property type="entry name" value="Ribosomal_bS18_CS"/>
</dbReference>
<dbReference type="InterPro" id="IPR036870">
    <property type="entry name" value="Ribosomal_bS18_sf"/>
</dbReference>
<dbReference type="NCBIfam" id="TIGR00165">
    <property type="entry name" value="S18"/>
    <property type="match status" value="1"/>
</dbReference>
<dbReference type="PANTHER" id="PTHR13479">
    <property type="entry name" value="30S RIBOSOMAL PROTEIN S18"/>
    <property type="match status" value="1"/>
</dbReference>
<dbReference type="PANTHER" id="PTHR13479:SF40">
    <property type="entry name" value="SMALL RIBOSOMAL SUBUNIT PROTEIN BS18M"/>
    <property type="match status" value="1"/>
</dbReference>
<dbReference type="Pfam" id="PF01084">
    <property type="entry name" value="Ribosomal_S18"/>
    <property type="match status" value="1"/>
</dbReference>
<dbReference type="PRINTS" id="PR00974">
    <property type="entry name" value="RIBOSOMALS18"/>
</dbReference>
<dbReference type="SUPFAM" id="SSF46911">
    <property type="entry name" value="Ribosomal protein S18"/>
    <property type="match status" value="1"/>
</dbReference>
<dbReference type="PROSITE" id="PS00057">
    <property type="entry name" value="RIBOSOMAL_S18"/>
    <property type="match status" value="1"/>
</dbReference>
<evidence type="ECO:0000255" key="1">
    <source>
        <dbReference type="HAMAP-Rule" id="MF_00270"/>
    </source>
</evidence>
<evidence type="ECO:0000305" key="2"/>
<accession>A4GGC7</accession>
<feature type="chain" id="PRO_0000345603" description="Small ribosomal subunit protein bS18c">
    <location>
        <begin position="1"/>
        <end position="102"/>
    </location>
</feature>